<feature type="chain" id="PRO_0000090571" description="Probable sugar isomerase mlr5709">
    <location>
        <begin position="1"/>
        <end position="430"/>
    </location>
</feature>
<feature type="binding site" evidence="1">
    <location>
        <position position="257"/>
    </location>
    <ligand>
        <name>Mn(2+)</name>
        <dbReference type="ChEBI" id="CHEBI:29035"/>
    </ligand>
</feature>
<feature type="binding site" evidence="1">
    <location>
        <position position="289"/>
    </location>
    <ligand>
        <name>Mn(2+)</name>
        <dbReference type="ChEBI" id="CHEBI:29035"/>
    </ligand>
</feature>
<feature type="binding site" evidence="1">
    <location>
        <position position="291"/>
    </location>
    <ligand>
        <name>Mn(2+)</name>
        <dbReference type="ChEBI" id="CHEBI:29035"/>
    </ligand>
</feature>
<proteinExistence type="inferred from homology"/>
<gene>
    <name type="ordered locus">mlr5709</name>
</gene>
<protein>
    <recommendedName>
        <fullName>Probable sugar isomerase mlr5709</fullName>
        <ecNumber>5.3.1.-</ecNumber>
    </recommendedName>
</protein>
<comment type="cofactor">
    <cofactor evidence="1">
        <name>Mn(2+)</name>
        <dbReference type="ChEBI" id="CHEBI:29035"/>
    </cofactor>
</comment>
<comment type="similarity">
    <text evidence="2">Belongs to the rhamnose isomerase family.</text>
</comment>
<sequence>MSETIISAEVVEKNNAARKPDLERDYASLGERLDRRGIAIDAIRAKVEKFAVAIPSWGVGTGGTRFARFPGAGEPRDIFDKIEDCAVISQLTQATPTVSLHIPWDKADPNRLKQAASRFGLGFDAMNSNTFSDARDQKLSYKFGSLSHADAGTRRQAVEHNLECIEIGKTLGSKALTVWIGDGSNFPGQVNFARAFERYLDAMKAVYAGLPADWKLFTEHKMYEPAFYSTVVQDWGTNYLIAKELGDRAFCLVDLGHHAPNVNIEMIVSRLIQFKKLGGFHFNDSKYGDDDLDAGSIDPYRLFLVFNELVDAELSGAEGFDPAHMLDQSHNVTDPIESLMLSAVEVQRAYAQALLVDRKALEGFQDGNDALMATQTLKAAYRTDVEPILAMARLKTGGAIDPVATYRAAGYRAKVAAERPAVTGGSGGIV</sequence>
<keyword id="KW-0413">Isomerase</keyword>
<keyword id="KW-0464">Manganese</keyword>
<keyword id="KW-0479">Metal-binding</keyword>
<dbReference type="EC" id="5.3.1.-"/>
<dbReference type="EMBL" id="BA000012">
    <property type="protein sequence ID" value="BAB52107.1"/>
    <property type="molecule type" value="Genomic_DNA"/>
</dbReference>
<dbReference type="SMR" id="Q98B65"/>
<dbReference type="KEGG" id="mlo:mlr5709"/>
<dbReference type="eggNOG" id="COG4952">
    <property type="taxonomic scope" value="Bacteria"/>
</dbReference>
<dbReference type="HOGENOM" id="CLU_059875_0_0_5"/>
<dbReference type="Proteomes" id="UP000000552">
    <property type="component" value="Chromosome"/>
</dbReference>
<dbReference type="GO" id="GO:0016853">
    <property type="term" value="F:isomerase activity"/>
    <property type="evidence" value="ECO:0007669"/>
    <property type="project" value="UniProtKB-KW"/>
</dbReference>
<dbReference type="GO" id="GO:0046872">
    <property type="term" value="F:metal ion binding"/>
    <property type="evidence" value="ECO:0007669"/>
    <property type="project" value="UniProtKB-KW"/>
</dbReference>
<dbReference type="Gene3D" id="3.20.20.150">
    <property type="entry name" value="Divalent-metal-dependent TIM barrel enzymes"/>
    <property type="match status" value="1"/>
</dbReference>
<dbReference type="InterPro" id="IPR050337">
    <property type="entry name" value="L-rhamnose_isomerase"/>
</dbReference>
<dbReference type="InterPro" id="IPR013451">
    <property type="entry name" value="L_rhamnose_iso"/>
</dbReference>
<dbReference type="InterPro" id="IPR036237">
    <property type="entry name" value="Xyl_isomerase-like_sf"/>
</dbReference>
<dbReference type="InterPro" id="IPR013022">
    <property type="entry name" value="Xyl_isomerase-like_TIM-brl"/>
</dbReference>
<dbReference type="NCBIfam" id="TIGR02629">
    <property type="entry name" value="L_rham_iso_rhiz"/>
    <property type="match status" value="1"/>
</dbReference>
<dbReference type="PANTHER" id="PTHR30268">
    <property type="entry name" value="L-RHAMNOSE ISOMERASE"/>
    <property type="match status" value="1"/>
</dbReference>
<dbReference type="PANTHER" id="PTHR30268:SF0">
    <property type="entry name" value="L-RHAMNOSE ISOMERASE"/>
    <property type="match status" value="1"/>
</dbReference>
<dbReference type="Pfam" id="PF01261">
    <property type="entry name" value="AP_endonuc_2"/>
    <property type="match status" value="1"/>
</dbReference>
<dbReference type="SUPFAM" id="SSF51658">
    <property type="entry name" value="Xylose isomerase-like"/>
    <property type="match status" value="1"/>
</dbReference>
<name>RHAL_RHILO</name>
<reference key="1">
    <citation type="journal article" date="2000" name="DNA Res.">
        <title>Complete genome structure of the nitrogen-fixing symbiotic bacterium Mesorhizobium loti.</title>
        <authorList>
            <person name="Kaneko T."/>
            <person name="Nakamura Y."/>
            <person name="Sato S."/>
            <person name="Asamizu E."/>
            <person name="Kato T."/>
            <person name="Sasamoto S."/>
            <person name="Watanabe A."/>
            <person name="Idesawa K."/>
            <person name="Ishikawa A."/>
            <person name="Kawashima K."/>
            <person name="Kimura T."/>
            <person name="Kishida Y."/>
            <person name="Kiyokawa C."/>
            <person name="Kohara M."/>
            <person name="Matsumoto M."/>
            <person name="Matsuno A."/>
            <person name="Mochizuki Y."/>
            <person name="Nakayama S."/>
            <person name="Nakazaki N."/>
            <person name="Shimpo S."/>
            <person name="Sugimoto M."/>
            <person name="Takeuchi C."/>
            <person name="Yamada M."/>
            <person name="Tabata S."/>
        </authorList>
    </citation>
    <scope>NUCLEOTIDE SEQUENCE [LARGE SCALE GENOMIC DNA]</scope>
    <source>
        <strain>LMG 29417 / CECT 9101 / MAFF 303099</strain>
    </source>
</reference>
<evidence type="ECO:0000250" key="1"/>
<evidence type="ECO:0000305" key="2"/>
<accession>Q98B65</accession>
<organism>
    <name type="scientific">Mesorhizobium japonicum (strain LMG 29417 / CECT 9101 / MAFF 303099)</name>
    <name type="common">Mesorhizobium loti (strain MAFF 303099)</name>
    <dbReference type="NCBI Taxonomy" id="266835"/>
    <lineage>
        <taxon>Bacteria</taxon>
        <taxon>Pseudomonadati</taxon>
        <taxon>Pseudomonadota</taxon>
        <taxon>Alphaproteobacteria</taxon>
        <taxon>Hyphomicrobiales</taxon>
        <taxon>Phyllobacteriaceae</taxon>
        <taxon>Mesorhizobium</taxon>
    </lineage>
</organism>